<organism>
    <name type="scientific">Albidiferax ferrireducens (strain ATCC BAA-621 / DSM 15236 / T118)</name>
    <name type="common">Rhodoferax ferrireducens</name>
    <dbReference type="NCBI Taxonomy" id="338969"/>
    <lineage>
        <taxon>Bacteria</taxon>
        <taxon>Pseudomonadati</taxon>
        <taxon>Pseudomonadota</taxon>
        <taxon>Betaproteobacteria</taxon>
        <taxon>Burkholderiales</taxon>
        <taxon>Comamonadaceae</taxon>
        <taxon>Rhodoferax</taxon>
    </lineage>
</organism>
<feature type="chain" id="PRO_0000271683" description="Molybdenum import ATP-binding protein ModC">
    <location>
        <begin position="1"/>
        <end position="369"/>
    </location>
</feature>
<feature type="domain" description="ABC transporter" evidence="1">
    <location>
        <begin position="3"/>
        <end position="246"/>
    </location>
</feature>
<feature type="domain" description="Mop" evidence="2">
    <location>
        <begin position="305"/>
        <end position="369"/>
    </location>
</feature>
<feature type="binding site" evidence="1">
    <location>
        <begin position="44"/>
        <end position="51"/>
    </location>
    <ligand>
        <name>ATP</name>
        <dbReference type="ChEBI" id="CHEBI:30616"/>
    </ligand>
</feature>
<sequence length="369" mass="39702">MNTRPEQASKDTSGLTLQVALQRQDFRLEIDLELAGHGITALFGPSGSGKTTALRVLAGLEPAAQGRVCVQGDMWQDSAQGVFKPVHQRALGYVFQEASLFDHLNVQENLQYGFKRTPASERFRNWDHTLDLLGIAHLLKRWPHELSGGERQRVAIARALAASPRLLLLDEPMAALDAPRKAEILPYLERLQSRLEIPVIYVTHAIDEVARLADQLVLLEAGQVTAHGPTAELLTRLDLPLAHGDSAGAVLHCSVVSHDEADHLTLTRFAGIDLVVPRQNAAVGQTLRVRVAARDASLTLQRQTDTSILNILPASVLALSADGPGQVMVALEVGGSALLARITARSAHTLGLVPGLAVYAQIKGVAILG</sequence>
<comment type="function">
    <text evidence="1">Part of the ABC transporter complex ModABC involved in molybdenum import. Responsible for energy coupling to the transport system.</text>
</comment>
<comment type="catalytic activity">
    <reaction evidence="1">
        <text>molybdate(out) + ATP + H2O = molybdate(in) + ADP + phosphate + H(+)</text>
        <dbReference type="Rhea" id="RHEA:22020"/>
        <dbReference type="ChEBI" id="CHEBI:15377"/>
        <dbReference type="ChEBI" id="CHEBI:15378"/>
        <dbReference type="ChEBI" id="CHEBI:30616"/>
        <dbReference type="ChEBI" id="CHEBI:36264"/>
        <dbReference type="ChEBI" id="CHEBI:43474"/>
        <dbReference type="ChEBI" id="CHEBI:456216"/>
        <dbReference type="EC" id="7.3.2.5"/>
    </reaction>
</comment>
<comment type="subunit">
    <text evidence="1">The complex is composed of two ATP-binding proteins (ModC), two transmembrane proteins (ModB) and a solute-binding protein (ModA).</text>
</comment>
<comment type="subcellular location">
    <subcellularLocation>
        <location evidence="1">Cell inner membrane</location>
        <topology evidence="1">Peripheral membrane protein</topology>
    </subcellularLocation>
</comment>
<comment type="similarity">
    <text evidence="1">Belongs to the ABC transporter superfamily. Molybdate importer (TC 3.A.1.8) family.</text>
</comment>
<keyword id="KW-0067">ATP-binding</keyword>
<keyword id="KW-0997">Cell inner membrane</keyword>
<keyword id="KW-1003">Cell membrane</keyword>
<keyword id="KW-0472">Membrane</keyword>
<keyword id="KW-0500">Molybdenum</keyword>
<keyword id="KW-0547">Nucleotide-binding</keyword>
<keyword id="KW-1185">Reference proteome</keyword>
<keyword id="KW-1278">Translocase</keyword>
<keyword id="KW-0813">Transport</keyword>
<proteinExistence type="inferred from homology"/>
<accession>Q21UI2</accession>
<name>MODC_ALBFT</name>
<dbReference type="EC" id="7.3.2.5" evidence="1"/>
<dbReference type="EMBL" id="CP000267">
    <property type="protein sequence ID" value="ABD70571.1"/>
    <property type="molecule type" value="Genomic_DNA"/>
</dbReference>
<dbReference type="RefSeq" id="WP_011465137.1">
    <property type="nucleotide sequence ID" value="NC_007908.1"/>
</dbReference>
<dbReference type="SMR" id="Q21UI2"/>
<dbReference type="STRING" id="338969.Rfer_2860"/>
<dbReference type="KEGG" id="rfr:Rfer_2860"/>
<dbReference type="eggNOG" id="COG4148">
    <property type="taxonomic scope" value="Bacteria"/>
</dbReference>
<dbReference type="HOGENOM" id="CLU_000604_1_1_4"/>
<dbReference type="OrthoDB" id="5298774at2"/>
<dbReference type="Proteomes" id="UP000008332">
    <property type="component" value="Chromosome"/>
</dbReference>
<dbReference type="GO" id="GO:0005886">
    <property type="term" value="C:plasma membrane"/>
    <property type="evidence" value="ECO:0007669"/>
    <property type="project" value="UniProtKB-SubCell"/>
</dbReference>
<dbReference type="GO" id="GO:0015412">
    <property type="term" value="F:ABC-type molybdate transporter activity"/>
    <property type="evidence" value="ECO:0007669"/>
    <property type="project" value="UniProtKB-EC"/>
</dbReference>
<dbReference type="GO" id="GO:0005524">
    <property type="term" value="F:ATP binding"/>
    <property type="evidence" value="ECO:0007669"/>
    <property type="project" value="UniProtKB-KW"/>
</dbReference>
<dbReference type="GO" id="GO:0016887">
    <property type="term" value="F:ATP hydrolysis activity"/>
    <property type="evidence" value="ECO:0007669"/>
    <property type="project" value="InterPro"/>
</dbReference>
<dbReference type="Gene3D" id="2.40.50.100">
    <property type="match status" value="1"/>
</dbReference>
<dbReference type="Gene3D" id="3.40.50.300">
    <property type="entry name" value="P-loop containing nucleotide triphosphate hydrolases"/>
    <property type="match status" value="1"/>
</dbReference>
<dbReference type="InterPro" id="IPR003593">
    <property type="entry name" value="AAA+_ATPase"/>
</dbReference>
<dbReference type="InterPro" id="IPR003439">
    <property type="entry name" value="ABC_transporter-like_ATP-bd"/>
</dbReference>
<dbReference type="InterPro" id="IPR017871">
    <property type="entry name" value="ABC_transporter-like_CS"/>
</dbReference>
<dbReference type="InterPro" id="IPR008995">
    <property type="entry name" value="Mo/tungstate-bd_C_term_dom"/>
</dbReference>
<dbReference type="InterPro" id="IPR011868">
    <property type="entry name" value="ModC_ABC_ATP-bd"/>
</dbReference>
<dbReference type="InterPro" id="IPR050334">
    <property type="entry name" value="Molybdenum_import_ModC"/>
</dbReference>
<dbReference type="InterPro" id="IPR004606">
    <property type="entry name" value="Mop_domain"/>
</dbReference>
<dbReference type="InterPro" id="IPR027417">
    <property type="entry name" value="P-loop_NTPase"/>
</dbReference>
<dbReference type="InterPro" id="IPR005116">
    <property type="entry name" value="Transp-assoc_OB_typ1"/>
</dbReference>
<dbReference type="NCBIfam" id="TIGR02142">
    <property type="entry name" value="modC_ABC"/>
    <property type="match status" value="1"/>
</dbReference>
<dbReference type="PANTHER" id="PTHR43514">
    <property type="entry name" value="ABC TRANSPORTER I FAMILY MEMBER 10"/>
    <property type="match status" value="1"/>
</dbReference>
<dbReference type="PANTHER" id="PTHR43514:SF10">
    <property type="entry name" value="MOLYBDENUM IMPORT ATP-BINDING PROTEIN MODC 2"/>
    <property type="match status" value="1"/>
</dbReference>
<dbReference type="Pfam" id="PF00005">
    <property type="entry name" value="ABC_tran"/>
    <property type="match status" value="1"/>
</dbReference>
<dbReference type="Pfam" id="PF03459">
    <property type="entry name" value="TOBE"/>
    <property type="match status" value="1"/>
</dbReference>
<dbReference type="SMART" id="SM00382">
    <property type="entry name" value="AAA"/>
    <property type="match status" value="1"/>
</dbReference>
<dbReference type="SUPFAM" id="SSF50331">
    <property type="entry name" value="MOP-like"/>
    <property type="match status" value="1"/>
</dbReference>
<dbReference type="SUPFAM" id="SSF52540">
    <property type="entry name" value="P-loop containing nucleoside triphosphate hydrolases"/>
    <property type="match status" value="1"/>
</dbReference>
<dbReference type="PROSITE" id="PS00211">
    <property type="entry name" value="ABC_TRANSPORTER_1"/>
    <property type="match status" value="1"/>
</dbReference>
<dbReference type="PROSITE" id="PS50893">
    <property type="entry name" value="ABC_TRANSPORTER_2"/>
    <property type="match status" value="1"/>
</dbReference>
<dbReference type="PROSITE" id="PS51241">
    <property type="entry name" value="MODC"/>
    <property type="match status" value="1"/>
</dbReference>
<dbReference type="PROSITE" id="PS51866">
    <property type="entry name" value="MOP"/>
    <property type="match status" value="1"/>
</dbReference>
<protein>
    <recommendedName>
        <fullName evidence="1">Molybdenum import ATP-binding protein ModC</fullName>
        <ecNumber evidence="1">7.3.2.5</ecNumber>
    </recommendedName>
</protein>
<evidence type="ECO:0000255" key="1">
    <source>
        <dbReference type="HAMAP-Rule" id="MF_01705"/>
    </source>
</evidence>
<evidence type="ECO:0000255" key="2">
    <source>
        <dbReference type="PROSITE-ProRule" id="PRU01213"/>
    </source>
</evidence>
<reference key="1">
    <citation type="submission" date="2006-02" db="EMBL/GenBank/DDBJ databases">
        <title>Complete sequence of chromosome of Rhodoferax ferrireducens DSM 15236.</title>
        <authorList>
            <person name="Copeland A."/>
            <person name="Lucas S."/>
            <person name="Lapidus A."/>
            <person name="Barry K."/>
            <person name="Detter J.C."/>
            <person name="Glavina del Rio T."/>
            <person name="Hammon N."/>
            <person name="Israni S."/>
            <person name="Pitluck S."/>
            <person name="Brettin T."/>
            <person name="Bruce D."/>
            <person name="Han C."/>
            <person name="Tapia R."/>
            <person name="Gilna P."/>
            <person name="Kiss H."/>
            <person name="Schmutz J."/>
            <person name="Larimer F."/>
            <person name="Land M."/>
            <person name="Kyrpides N."/>
            <person name="Ivanova N."/>
            <person name="Richardson P."/>
        </authorList>
    </citation>
    <scope>NUCLEOTIDE SEQUENCE [LARGE SCALE GENOMIC DNA]</scope>
    <source>
        <strain>ATCC BAA-621 / DSM 15236 / T118</strain>
    </source>
</reference>
<gene>
    <name evidence="1" type="primary">modC</name>
    <name type="ordered locus">Rfer_2860</name>
</gene>